<organism>
    <name type="scientific">Pseudomonas aeruginosa (strain UCBPP-PA14)</name>
    <dbReference type="NCBI Taxonomy" id="208963"/>
    <lineage>
        <taxon>Bacteria</taxon>
        <taxon>Pseudomonadati</taxon>
        <taxon>Pseudomonadota</taxon>
        <taxon>Gammaproteobacteria</taxon>
        <taxon>Pseudomonadales</taxon>
        <taxon>Pseudomonadaceae</taxon>
        <taxon>Pseudomonas</taxon>
    </lineage>
</organism>
<gene>
    <name evidence="1" type="primary">tsaD</name>
    <name type="synonym">gcp</name>
    <name type="ordered locus">PA14_07570</name>
</gene>
<dbReference type="EC" id="2.3.1.234" evidence="1"/>
<dbReference type="EMBL" id="CP000438">
    <property type="protein sequence ID" value="ABJ15544.1"/>
    <property type="molecule type" value="Genomic_DNA"/>
</dbReference>
<dbReference type="RefSeq" id="WP_003137360.1">
    <property type="nucleotide sequence ID" value="NZ_CP034244.1"/>
</dbReference>
<dbReference type="SMR" id="Q02TI3"/>
<dbReference type="KEGG" id="pau:PA14_07570"/>
<dbReference type="PseudoCAP" id="PA14_07570"/>
<dbReference type="HOGENOM" id="CLU_023208_0_2_6"/>
<dbReference type="BioCyc" id="PAER208963:G1G74-625-MONOMER"/>
<dbReference type="Proteomes" id="UP000000653">
    <property type="component" value="Chromosome"/>
</dbReference>
<dbReference type="GO" id="GO:0005737">
    <property type="term" value="C:cytoplasm"/>
    <property type="evidence" value="ECO:0007669"/>
    <property type="project" value="UniProtKB-SubCell"/>
</dbReference>
<dbReference type="GO" id="GO:0005506">
    <property type="term" value="F:iron ion binding"/>
    <property type="evidence" value="ECO:0007669"/>
    <property type="project" value="UniProtKB-UniRule"/>
</dbReference>
<dbReference type="GO" id="GO:0061711">
    <property type="term" value="F:N(6)-L-threonylcarbamoyladenine synthase activity"/>
    <property type="evidence" value="ECO:0007669"/>
    <property type="project" value="UniProtKB-EC"/>
</dbReference>
<dbReference type="GO" id="GO:0002949">
    <property type="term" value="P:tRNA threonylcarbamoyladenosine modification"/>
    <property type="evidence" value="ECO:0007669"/>
    <property type="project" value="UniProtKB-UniRule"/>
</dbReference>
<dbReference type="CDD" id="cd24133">
    <property type="entry name" value="ASKHA_NBD_TsaD_bac"/>
    <property type="match status" value="1"/>
</dbReference>
<dbReference type="FunFam" id="3.30.420.40:FF:000012">
    <property type="entry name" value="tRNA N6-adenosine threonylcarbamoyltransferase"/>
    <property type="match status" value="1"/>
</dbReference>
<dbReference type="FunFam" id="3.30.420.40:FF:000031">
    <property type="entry name" value="tRNA N6-adenosine threonylcarbamoyltransferase"/>
    <property type="match status" value="1"/>
</dbReference>
<dbReference type="Gene3D" id="3.30.420.40">
    <property type="match status" value="2"/>
</dbReference>
<dbReference type="HAMAP" id="MF_01445">
    <property type="entry name" value="TsaD"/>
    <property type="match status" value="1"/>
</dbReference>
<dbReference type="InterPro" id="IPR043129">
    <property type="entry name" value="ATPase_NBD"/>
</dbReference>
<dbReference type="InterPro" id="IPR000905">
    <property type="entry name" value="Gcp-like_dom"/>
</dbReference>
<dbReference type="InterPro" id="IPR017861">
    <property type="entry name" value="KAE1/TsaD"/>
</dbReference>
<dbReference type="InterPro" id="IPR022450">
    <property type="entry name" value="TsaD"/>
</dbReference>
<dbReference type="NCBIfam" id="TIGR00329">
    <property type="entry name" value="gcp_kae1"/>
    <property type="match status" value="1"/>
</dbReference>
<dbReference type="NCBIfam" id="TIGR03723">
    <property type="entry name" value="T6A_TsaD_YgjD"/>
    <property type="match status" value="1"/>
</dbReference>
<dbReference type="PANTHER" id="PTHR11735">
    <property type="entry name" value="TRNA N6-ADENOSINE THREONYLCARBAMOYLTRANSFERASE"/>
    <property type="match status" value="1"/>
</dbReference>
<dbReference type="PANTHER" id="PTHR11735:SF6">
    <property type="entry name" value="TRNA N6-ADENOSINE THREONYLCARBAMOYLTRANSFERASE, MITOCHONDRIAL"/>
    <property type="match status" value="1"/>
</dbReference>
<dbReference type="Pfam" id="PF00814">
    <property type="entry name" value="TsaD"/>
    <property type="match status" value="1"/>
</dbReference>
<dbReference type="PRINTS" id="PR00789">
    <property type="entry name" value="OSIALOPTASE"/>
</dbReference>
<dbReference type="SUPFAM" id="SSF53067">
    <property type="entry name" value="Actin-like ATPase domain"/>
    <property type="match status" value="2"/>
</dbReference>
<reference key="1">
    <citation type="journal article" date="2006" name="Genome Biol.">
        <title>Genomic analysis reveals that Pseudomonas aeruginosa virulence is combinatorial.</title>
        <authorList>
            <person name="Lee D.G."/>
            <person name="Urbach J.M."/>
            <person name="Wu G."/>
            <person name="Liberati N.T."/>
            <person name="Feinbaum R.L."/>
            <person name="Miyata S."/>
            <person name="Diggins L.T."/>
            <person name="He J."/>
            <person name="Saucier M."/>
            <person name="Deziel E."/>
            <person name="Friedman L."/>
            <person name="Li L."/>
            <person name="Grills G."/>
            <person name="Montgomery K."/>
            <person name="Kucherlapati R."/>
            <person name="Rahme L.G."/>
            <person name="Ausubel F.M."/>
        </authorList>
    </citation>
    <scope>NUCLEOTIDE SEQUENCE [LARGE SCALE GENOMIC DNA]</scope>
    <source>
        <strain>UCBPP-PA14</strain>
    </source>
</reference>
<name>TSAD_PSEAB</name>
<feature type="chain" id="PRO_0000303491" description="tRNA N6-adenosine threonylcarbamoyltransferase">
    <location>
        <begin position="1"/>
        <end position="341"/>
    </location>
</feature>
<feature type="binding site" evidence="1">
    <location>
        <position position="111"/>
    </location>
    <ligand>
        <name>Fe cation</name>
        <dbReference type="ChEBI" id="CHEBI:24875"/>
    </ligand>
</feature>
<feature type="binding site" evidence="1">
    <location>
        <position position="115"/>
    </location>
    <ligand>
        <name>Fe cation</name>
        <dbReference type="ChEBI" id="CHEBI:24875"/>
    </ligand>
</feature>
<feature type="binding site" evidence="1">
    <location>
        <begin position="134"/>
        <end position="138"/>
    </location>
    <ligand>
        <name>substrate</name>
    </ligand>
</feature>
<feature type="binding site" evidence="1">
    <location>
        <position position="167"/>
    </location>
    <ligand>
        <name>substrate</name>
    </ligand>
</feature>
<feature type="binding site" evidence="1">
    <location>
        <position position="180"/>
    </location>
    <ligand>
        <name>substrate</name>
    </ligand>
</feature>
<feature type="binding site" evidence="1">
    <location>
        <position position="276"/>
    </location>
    <ligand>
        <name>substrate</name>
    </ligand>
</feature>
<feature type="binding site" evidence="1">
    <location>
        <position position="304"/>
    </location>
    <ligand>
        <name>Fe cation</name>
        <dbReference type="ChEBI" id="CHEBI:24875"/>
    </ligand>
</feature>
<proteinExistence type="inferred from homology"/>
<comment type="function">
    <text evidence="1">Required for the formation of a threonylcarbamoyl group on adenosine at position 37 (t(6)A37) in tRNAs that read codons beginning with adenine. Is involved in the transfer of the threonylcarbamoyl moiety of threonylcarbamoyl-AMP (TC-AMP) to the N6 group of A37, together with TsaE and TsaB. TsaD likely plays a direct catalytic role in this reaction.</text>
</comment>
<comment type="catalytic activity">
    <reaction evidence="1">
        <text>L-threonylcarbamoyladenylate + adenosine(37) in tRNA = N(6)-L-threonylcarbamoyladenosine(37) in tRNA + AMP + H(+)</text>
        <dbReference type="Rhea" id="RHEA:37059"/>
        <dbReference type="Rhea" id="RHEA-COMP:10162"/>
        <dbReference type="Rhea" id="RHEA-COMP:10163"/>
        <dbReference type="ChEBI" id="CHEBI:15378"/>
        <dbReference type="ChEBI" id="CHEBI:73682"/>
        <dbReference type="ChEBI" id="CHEBI:74411"/>
        <dbReference type="ChEBI" id="CHEBI:74418"/>
        <dbReference type="ChEBI" id="CHEBI:456215"/>
        <dbReference type="EC" id="2.3.1.234"/>
    </reaction>
</comment>
<comment type="cofactor">
    <cofactor evidence="1">
        <name>Fe(2+)</name>
        <dbReference type="ChEBI" id="CHEBI:29033"/>
    </cofactor>
    <text evidence="1">Binds 1 Fe(2+) ion per subunit.</text>
</comment>
<comment type="subcellular location">
    <subcellularLocation>
        <location evidence="1">Cytoplasm</location>
    </subcellularLocation>
</comment>
<comment type="similarity">
    <text evidence="1">Belongs to the KAE1 / TsaD family.</text>
</comment>
<sequence length="341" mass="36529">MRVLGLETSCDETGVALYDSERGLLADALFSQIDLHRVYGGVVPELASRDHVKRMLPLIRQVLDESGCTPADIDAIAYTAGPGLVGALLVGASCAQAVAFAWGVPAVGVHHMEGHLLAPMLEEQPPRFPFVALLVSGGHTQLVRVDGIGRYQLLGESVDDAAGEAFDKTAKLIGLGYPGGPEIARLAERGTPGRFVFPRPMTDRPGLDFSFSGLKTFTLNTWQRCVEAGDDSEQTRCDIALAFQTAVVETLLIKCRRALKQTGLKNLVIAGGVSANQALRSGLEKMLGEMKGQVFYARPRFCTDNGAMIAYAGCQRLLAGQHDGPAISVQPRWPMESLPAV</sequence>
<evidence type="ECO:0000255" key="1">
    <source>
        <dbReference type="HAMAP-Rule" id="MF_01445"/>
    </source>
</evidence>
<protein>
    <recommendedName>
        <fullName evidence="1">tRNA N6-adenosine threonylcarbamoyltransferase</fullName>
        <ecNumber evidence="1">2.3.1.234</ecNumber>
    </recommendedName>
    <alternativeName>
        <fullName evidence="1">N6-L-threonylcarbamoyladenine synthase</fullName>
        <shortName evidence="1">t(6)A synthase</shortName>
    </alternativeName>
    <alternativeName>
        <fullName evidence="1">t(6)A37 threonylcarbamoyladenosine biosynthesis protein TsaD</fullName>
    </alternativeName>
    <alternativeName>
        <fullName evidence="1">tRNA threonylcarbamoyladenosine biosynthesis protein TsaD</fullName>
    </alternativeName>
</protein>
<accession>Q02TI3</accession>
<keyword id="KW-0012">Acyltransferase</keyword>
<keyword id="KW-0963">Cytoplasm</keyword>
<keyword id="KW-0408">Iron</keyword>
<keyword id="KW-0479">Metal-binding</keyword>
<keyword id="KW-0808">Transferase</keyword>
<keyword id="KW-0819">tRNA processing</keyword>